<protein>
    <recommendedName>
        <fullName evidence="1">GTPase Obg</fullName>
        <ecNumber evidence="1">3.6.5.-</ecNumber>
    </recommendedName>
    <alternativeName>
        <fullName evidence="1">GTP-binding protein Obg</fullName>
    </alternativeName>
</protein>
<dbReference type="EC" id="3.6.5.-" evidence="1"/>
<dbReference type="EMBL" id="CU928160">
    <property type="protein sequence ID" value="CAR00145.1"/>
    <property type="molecule type" value="Genomic_DNA"/>
</dbReference>
<dbReference type="SMR" id="B7M089"/>
<dbReference type="KEGG" id="ecr:ECIAI1_3331"/>
<dbReference type="HOGENOM" id="CLU_011747_2_0_6"/>
<dbReference type="GO" id="GO:0005737">
    <property type="term" value="C:cytoplasm"/>
    <property type="evidence" value="ECO:0007669"/>
    <property type="project" value="UniProtKB-SubCell"/>
</dbReference>
<dbReference type="GO" id="GO:0005525">
    <property type="term" value="F:GTP binding"/>
    <property type="evidence" value="ECO:0007669"/>
    <property type="project" value="UniProtKB-UniRule"/>
</dbReference>
<dbReference type="GO" id="GO:0003924">
    <property type="term" value="F:GTPase activity"/>
    <property type="evidence" value="ECO:0007669"/>
    <property type="project" value="UniProtKB-UniRule"/>
</dbReference>
<dbReference type="GO" id="GO:0000287">
    <property type="term" value="F:magnesium ion binding"/>
    <property type="evidence" value="ECO:0007669"/>
    <property type="project" value="InterPro"/>
</dbReference>
<dbReference type="GO" id="GO:0042254">
    <property type="term" value="P:ribosome biogenesis"/>
    <property type="evidence" value="ECO:0007669"/>
    <property type="project" value="UniProtKB-UniRule"/>
</dbReference>
<dbReference type="CDD" id="cd01898">
    <property type="entry name" value="Obg"/>
    <property type="match status" value="1"/>
</dbReference>
<dbReference type="FunFam" id="2.70.210.12:FF:000001">
    <property type="entry name" value="GTPase Obg"/>
    <property type="match status" value="1"/>
</dbReference>
<dbReference type="FunFam" id="3.40.50.300:FF:000185">
    <property type="entry name" value="GTPase Obg"/>
    <property type="match status" value="1"/>
</dbReference>
<dbReference type="Gene3D" id="2.70.210.12">
    <property type="entry name" value="GTP1/OBG domain"/>
    <property type="match status" value="1"/>
</dbReference>
<dbReference type="Gene3D" id="3.40.50.300">
    <property type="entry name" value="P-loop containing nucleotide triphosphate hydrolases"/>
    <property type="match status" value="1"/>
</dbReference>
<dbReference type="HAMAP" id="MF_01454">
    <property type="entry name" value="GTPase_Obg"/>
    <property type="match status" value="1"/>
</dbReference>
<dbReference type="InterPro" id="IPR031167">
    <property type="entry name" value="G_OBG"/>
</dbReference>
<dbReference type="InterPro" id="IPR006073">
    <property type="entry name" value="GTP-bd"/>
</dbReference>
<dbReference type="InterPro" id="IPR014100">
    <property type="entry name" value="GTP-bd_Obg/CgtA"/>
</dbReference>
<dbReference type="InterPro" id="IPR006074">
    <property type="entry name" value="GTP1-OBG_CS"/>
</dbReference>
<dbReference type="InterPro" id="IPR006169">
    <property type="entry name" value="GTP1_OBG_dom"/>
</dbReference>
<dbReference type="InterPro" id="IPR036726">
    <property type="entry name" value="GTP1_OBG_dom_sf"/>
</dbReference>
<dbReference type="InterPro" id="IPR045086">
    <property type="entry name" value="OBG_GTPase"/>
</dbReference>
<dbReference type="InterPro" id="IPR027417">
    <property type="entry name" value="P-loop_NTPase"/>
</dbReference>
<dbReference type="NCBIfam" id="TIGR02729">
    <property type="entry name" value="Obg_CgtA"/>
    <property type="match status" value="1"/>
</dbReference>
<dbReference type="NCBIfam" id="NF008955">
    <property type="entry name" value="PRK12297.1"/>
    <property type="match status" value="1"/>
</dbReference>
<dbReference type="NCBIfam" id="NF008956">
    <property type="entry name" value="PRK12299.1"/>
    <property type="match status" value="1"/>
</dbReference>
<dbReference type="PANTHER" id="PTHR11702">
    <property type="entry name" value="DEVELOPMENTALLY REGULATED GTP-BINDING PROTEIN-RELATED"/>
    <property type="match status" value="1"/>
</dbReference>
<dbReference type="PANTHER" id="PTHR11702:SF31">
    <property type="entry name" value="MITOCHONDRIAL RIBOSOME-ASSOCIATED GTPASE 2"/>
    <property type="match status" value="1"/>
</dbReference>
<dbReference type="Pfam" id="PF01018">
    <property type="entry name" value="GTP1_OBG"/>
    <property type="match status" value="1"/>
</dbReference>
<dbReference type="Pfam" id="PF01926">
    <property type="entry name" value="MMR_HSR1"/>
    <property type="match status" value="1"/>
</dbReference>
<dbReference type="PIRSF" id="PIRSF002401">
    <property type="entry name" value="GTP_bd_Obg/CgtA"/>
    <property type="match status" value="1"/>
</dbReference>
<dbReference type="PRINTS" id="PR00326">
    <property type="entry name" value="GTP1OBG"/>
</dbReference>
<dbReference type="SUPFAM" id="SSF82051">
    <property type="entry name" value="Obg GTP-binding protein N-terminal domain"/>
    <property type="match status" value="1"/>
</dbReference>
<dbReference type="SUPFAM" id="SSF52540">
    <property type="entry name" value="P-loop containing nucleoside triphosphate hydrolases"/>
    <property type="match status" value="1"/>
</dbReference>
<dbReference type="PROSITE" id="PS51710">
    <property type="entry name" value="G_OBG"/>
    <property type="match status" value="1"/>
</dbReference>
<dbReference type="PROSITE" id="PS00905">
    <property type="entry name" value="GTP1_OBG"/>
    <property type="match status" value="1"/>
</dbReference>
<dbReference type="PROSITE" id="PS51883">
    <property type="entry name" value="OBG"/>
    <property type="match status" value="1"/>
</dbReference>
<proteinExistence type="inferred from homology"/>
<organism>
    <name type="scientific">Escherichia coli O8 (strain IAI1)</name>
    <dbReference type="NCBI Taxonomy" id="585034"/>
    <lineage>
        <taxon>Bacteria</taxon>
        <taxon>Pseudomonadati</taxon>
        <taxon>Pseudomonadota</taxon>
        <taxon>Gammaproteobacteria</taxon>
        <taxon>Enterobacterales</taxon>
        <taxon>Enterobacteriaceae</taxon>
        <taxon>Escherichia</taxon>
    </lineage>
</organism>
<comment type="function">
    <text evidence="1">An essential GTPase which binds GTP, GDP and possibly (p)ppGpp with moderate affinity, with high nucleotide exchange rates and a fairly low GTP hydrolysis rate. Plays a role in control of the cell cycle, stress response, ribosome biogenesis and in those bacteria that undergo differentiation, in morphogenesis control.</text>
</comment>
<comment type="cofactor">
    <cofactor evidence="1">
        <name>Mg(2+)</name>
        <dbReference type="ChEBI" id="CHEBI:18420"/>
    </cofactor>
</comment>
<comment type="subunit">
    <text evidence="1">Monomer.</text>
</comment>
<comment type="subcellular location">
    <subcellularLocation>
        <location evidence="1">Cytoplasm</location>
    </subcellularLocation>
</comment>
<comment type="similarity">
    <text evidence="1">Belongs to the TRAFAC class OBG-HflX-like GTPase superfamily. OBG GTPase family.</text>
</comment>
<keyword id="KW-0963">Cytoplasm</keyword>
<keyword id="KW-0342">GTP-binding</keyword>
<keyword id="KW-0378">Hydrolase</keyword>
<keyword id="KW-0460">Magnesium</keyword>
<keyword id="KW-0479">Metal-binding</keyword>
<keyword id="KW-0547">Nucleotide-binding</keyword>
<name>OBG_ECO8A</name>
<evidence type="ECO:0000255" key="1">
    <source>
        <dbReference type="HAMAP-Rule" id="MF_01454"/>
    </source>
</evidence>
<evidence type="ECO:0000255" key="2">
    <source>
        <dbReference type="PROSITE-ProRule" id="PRU01231"/>
    </source>
</evidence>
<evidence type="ECO:0000256" key="3">
    <source>
        <dbReference type="SAM" id="MobiDB-lite"/>
    </source>
</evidence>
<reference key="1">
    <citation type="journal article" date="2009" name="PLoS Genet.">
        <title>Organised genome dynamics in the Escherichia coli species results in highly diverse adaptive paths.</title>
        <authorList>
            <person name="Touchon M."/>
            <person name="Hoede C."/>
            <person name="Tenaillon O."/>
            <person name="Barbe V."/>
            <person name="Baeriswyl S."/>
            <person name="Bidet P."/>
            <person name="Bingen E."/>
            <person name="Bonacorsi S."/>
            <person name="Bouchier C."/>
            <person name="Bouvet O."/>
            <person name="Calteau A."/>
            <person name="Chiapello H."/>
            <person name="Clermont O."/>
            <person name="Cruveiller S."/>
            <person name="Danchin A."/>
            <person name="Diard M."/>
            <person name="Dossat C."/>
            <person name="Karoui M.E."/>
            <person name="Frapy E."/>
            <person name="Garry L."/>
            <person name="Ghigo J.M."/>
            <person name="Gilles A.M."/>
            <person name="Johnson J."/>
            <person name="Le Bouguenec C."/>
            <person name="Lescat M."/>
            <person name="Mangenot S."/>
            <person name="Martinez-Jehanne V."/>
            <person name="Matic I."/>
            <person name="Nassif X."/>
            <person name="Oztas S."/>
            <person name="Petit M.A."/>
            <person name="Pichon C."/>
            <person name="Rouy Z."/>
            <person name="Ruf C.S."/>
            <person name="Schneider D."/>
            <person name="Tourret J."/>
            <person name="Vacherie B."/>
            <person name="Vallenet D."/>
            <person name="Medigue C."/>
            <person name="Rocha E.P.C."/>
            <person name="Denamur E."/>
        </authorList>
    </citation>
    <scope>NUCLEOTIDE SEQUENCE [LARGE SCALE GENOMIC DNA]</scope>
    <source>
        <strain>IAI1</strain>
    </source>
</reference>
<feature type="chain" id="PRO_0000385926" description="GTPase Obg">
    <location>
        <begin position="1"/>
        <end position="390"/>
    </location>
</feature>
<feature type="domain" description="Obg" evidence="2">
    <location>
        <begin position="1"/>
        <end position="159"/>
    </location>
</feature>
<feature type="domain" description="OBG-type G" evidence="1">
    <location>
        <begin position="160"/>
        <end position="333"/>
    </location>
</feature>
<feature type="region of interest" description="Disordered" evidence="3">
    <location>
        <begin position="127"/>
        <end position="147"/>
    </location>
</feature>
<feature type="compositionally biased region" description="Polar residues" evidence="3">
    <location>
        <begin position="129"/>
        <end position="145"/>
    </location>
</feature>
<feature type="binding site" evidence="1">
    <location>
        <begin position="166"/>
        <end position="173"/>
    </location>
    <ligand>
        <name>GTP</name>
        <dbReference type="ChEBI" id="CHEBI:37565"/>
    </ligand>
</feature>
<feature type="binding site" evidence="1">
    <location>
        <position position="173"/>
    </location>
    <ligand>
        <name>Mg(2+)</name>
        <dbReference type="ChEBI" id="CHEBI:18420"/>
    </ligand>
</feature>
<feature type="binding site" evidence="1">
    <location>
        <begin position="191"/>
        <end position="195"/>
    </location>
    <ligand>
        <name>GTP</name>
        <dbReference type="ChEBI" id="CHEBI:37565"/>
    </ligand>
</feature>
<feature type="binding site" evidence="1">
    <location>
        <position position="193"/>
    </location>
    <ligand>
        <name>Mg(2+)</name>
        <dbReference type="ChEBI" id="CHEBI:18420"/>
    </ligand>
</feature>
<feature type="binding site" evidence="1">
    <location>
        <begin position="213"/>
        <end position="216"/>
    </location>
    <ligand>
        <name>GTP</name>
        <dbReference type="ChEBI" id="CHEBI:37565"/>
    </ligand>
</feature>
<feature type="binding site" evidence="1">
    <location>
        <begin position="283"/>
        <end position="286"/>
    </location>
    <ligand>
        <name>GTP</name>
        <dbReference type="ChEBI" id="CHEBI:37565"/>
    </ligand>
</feature>
<feature type="binding site" evidence="1">
    <location>
        <begin position="314"/>
        <end position="316"/>
    </location>
    <ligand>
        <name>GTP</name>
        <dbReference type="ChEBI" id="CHEBI:37565"/>
    </ligand>
</feature>
<gene>
    <name evidence="1" type="primary">obg</name>
    <name type="ordered locus">ECIAI1_3331</name>
</gene>
<sequence length="390" mass="43228">MKFVDEASILVVAGDGGNGCVSFRREKYIPKGGPDGGDGGDGGDVWMEADENLNTLIDYRFEKSFRAERGQNGASRDCTGKRGKDVTIKVPVGTRVIDQGTGETMGDMTKHGQRLLVAKGGWHGLGNTRFKSSVNRTPRQKTNGTPGDKRELLLELMLLADVGMLGMPNAGKSTFIRAVSAAKPKVADYPFTTLVPSLGVVRMDNEKSFVVADIPGLIEGAAEGAGLGIRFLKHLERCRVLLHLIDIDPIDGTDPVENARIIISELEKYSQDLAAKPRWLVFNKIDLLDKAEAEEKAKAIAEALGWEDKYYLISAASGLGVKDLCWDVMTFIIENPVVQAEEAKQPEKVEFMWDDYHRQQLEEIAEEDDEDWDDDWDEDDEEGVEFIYKR</sequence>
<accession>B7M089</accession>